<feature type="chain" id="PRO_0000118029" description="NAD(P)H-quinone oxidoreductase chain 4, chloroplastic">
    <location>
        <begin position="1"/>
        <end position="500"/>
    </location>
</feature>
<feature type="transmembrane region" description="Helical" evidence="1">
    <location>
        <begin position="4"/>
        <end position="24"/>
    </location>
</feature>
<feature type="transmembrane region" description="Helical" evidence="1">
    <location>
        <begin position="35"/>
        <end position="55"/>
    </location>
</feature>
<feature type="transmembrane region" description="Helical" evidence="1">
    <location>
        <begin position="87"/>
        <end position="107"/>
    </location>
</feature>
<feature type="transmembrane region" description="Helical" evidence="1">
    <location>
        <begin position="111"/>
        <end position="131"/>
    </location>
</feature>
<feature type="transmembrane region" description="Helical" evidence="1">
    <location>
        <begin position="134"/>
        <end position="154"/>
    </location>
</feature>
<feature type="transmembrane region" description="Helical" evidence="1">
    <location>
        <begin position="167"/>
        <end position="187"/>
    </location>
</feature>
<feature type="transmembrane region" description="Helical" evidence="1">
    <location>
        <begin position="211"/>
        <end position="231"/>
    </location>
</feature>
<feature type="transmembrane region" description="Helical" evidence="1">
    <location>
        <begin position="242"/>
        <end position="262"/>
    </location>
</feature>
<feature type="transmembrane region" description="Helical" evidence="1">
    <location>
        <begin position="272"/>
        <end position="292"/>
    </location>
</feature>
<feature type="transmembrane region" description="Helical" evidence="1">
    <location>
        <begin position="313"/>
        <end position="333"/>
    </location>
</feature>
<feature type="transmembrane region" description="Helical" evidence="1">
    <location>
        <begin position="334"/>
        <end position="354"/>
    </location>
</feature>
<feature type="transmembrane region" description="Helical" evidence="1">
    <location>
        <begin position="386"/>
        <end position="406"/>
    </location>
</feature>
<feature type="transmembrane region" description="Helical" evidence="1">
    <location>
        <begin position="417"/>
        <end position="437"/>
    </location>
</feature>
<feature type="transmembrane region" description="Helical" evidence="1">
    <location>
        <begin position="462"/>
        <end position="482"/>
    </location>
</feature>
<reference key="1">
    <citation type="journal article" date="2004" name="DNA Res.">
        <title>Complete nucleotide sequence of the sugarcane (Saccharum officinarum) chloroplast genome: a comparative analysis of four monocot chloroplast genomes.</title>
        <authorList>
            <person name="Asano T."/>
            <person name="Tsudzuki T."/>
            <person name="Takahashi S."/>
            <person name="Shimada H."/>
            <person name="Kadowaki K."/>
        </authorList>
    </citation>
    <scope>NUCLEOTIDE SEQUENCE [LARGE SCALE GENOMIC DNA]</scope>
</reference>
<proteinExistence type="inferred from homology"/>
<protein>
    <recommendedName>
        <fullName evidence="1">NAD(P)H-quinone oxidoreductase chain 4, chloroplastic</fullName>
        <ecNumber evidence="1">7.1.1.-</ecNumber>
    </recommendedName>
    <alternativeName>
        <fullName evidence="1">NAD(P)H dehydrogenase, chain 4</fullName>
    </alternativeName>
    <alternativeName>
        <fullName evidence="1">NADH-plastoquinone oxidoreductase chain 4</fullName>
    </alternativeName>
</protein>
<evidence type="ECO:0000255" key="1">
    <source>
        <dbReference type="HAMAP-Rule" id="MF_00491"/>
    </source>
</evidence>
<evidence type="ECO:0000305" key="2"/>
<comment type="catalytic activity">
    <reaction evidence="1">
        <text>a plastoquinone + NADH + (n+1) H(+)(in) = a plastoquinol + NAD(+) + n H(+)(out)</text>
        <dbReference type="Rhea" id="RHEA:42608"/>
        <dbReference type="Rhea" id="RHEA-COMP:9561"/>
        <dbReference type="Rhea" id="RHEA-COMP:9562"/>
        <dbReference type="ChEBI" id="CHEBI:15378"/>
        <dbReference type="ChEBI" id="CHEBI:17757"/>
        <dbReference type="ChEBI" id="CHEBI:57540"/>
        <dbReference type="ChEBI" id="CHEBI:57945"/>
        <dbReference type="ChEBI" id="CHEBI:62192"/>
    </reaction>
</comment>
<comment type="catalytic activity">
    <reaction evidence="1">
        <text>a plastoquinone + NADPH + (n+1) H(+)(in) = a plastoquinol + NADP(+) + n H(+)(out)</text>
        <dbReference type="Rhea" id="RHEA:42612"/>
        <dbReference type="Rhea" id="RHEA-COMP:9561"/>
        <dbReference type="Rhea" id="RHEA-COMP:9562"/>
        <dbReference type="ChEBI" id="CHEBI:15378"/>
        <dbReference type="ChEBI" id="CHEBI:17757"/>
        <dbReference type="ChEBI" id="CHEBI:57783"/>
        <dbReference type="ChEBI" id="CHEBI:58349"/>
        <dbReference type="ChEBI" id="CHEBI:62192"/>
    </reaction>
</comment>
<comment type="subcellular location">
    <subcellularLocation>
        <location evidence="1">Plastid</location>
        <location evidence="1">Chloroplast thylakoid membrane</location>
        <topology evidence="1">Multi-pass membrane protein</topology>
    </subcellularLocation>
</comment>
<comment type="similarity">
    <text evidence="1">Belongs to the complex I subunit 4 family.</text>
</comment>
<comment type="sequence caution" evidence="2">
    <conflict type="erroneous initiation">
        <sequence resource="EMBL-CDS" id="BAD27359"/>
    </conflict>
</comment>
<sequence>MSYFPWLTILVVLPIFAGSLIFFLPHKGNKIVRWYTIAICLLEFLIMTYAFCYHFQLEDPLIQLKEDSKWIDVFDFHWRLGIDGLSLGSILLTGFITTLATLAAWPVTRNSQLFYFLMLAMYSGQIGLFSSRDLLLFFIMWELELIPVYLLLSMWGGKRRLYSATKFILYTAGGSIFFLIGVLGMGLYGSNEPGLDLERLINQSYPTTLEILLYFGFLIAYAVKLPIIPLHTWLPDTHGEAHYSTCMLLAGILLKMGAYGLIRVNMELLPHAHYLFSPWLVIIGAVQIIYAASTSLGQRNFKKRIAYSSVSHMGFIIIGIGSITNIGLNGAILQILSHGFIGATLFFLAGTACDRMRLVYLEELGGISIPMPKIFTMFSSFSMASLALPGMSGFVAELVVFFGLITSPKFMLMPKMLITFVMAIGMILTPIYLLSMLRQMFYGYKLFHVPNKNFVDSGPRELFLLICIFLPVIGIGIYPDFVLSLSVDRVEVLLSNYYTK</sequence>
<accession>Q6ENP7</accession>
<gene>
    <name evidence="1" type="primary">ndhD</name>
</gene>
<keyword id="KW-0150">Chloroplast</keyword>
<keyword id="KW-0472">Membrane</keyword>
<keyword id="KW-0520">NAD</keyword>
<keyword id="KW-0521">NADP</keyword>
<keyword id="KW-0934">Plastid</keyword>
<keyword id="KW-0618">Plastoquinone</keyword>
<keyword id="KW-0874">Quinone</keyword>
<keyword id="KW-0793">Thylakoid</keyword>
<keyword id="KW-1278">Translocase</keyword>
<keyword id="KW-0812">Transmembrane</keyword>
<keyword id="KW-1133">Transmembrane helix</keyword>
<dbReference type="EC" id="7.1.1.-" evidence="1"/>
<dbReference type="EMBL" id="AP006714">
    <property type="protein sequence ID" value="BAD27359.1"/>
    <property type="status" value="ALT_INIT"/>
    <property type="molecule type" value="Genomic_DNA"/>
</dbReference>
<dbReference type="RefSeq" id="YP_009389631.1">
    <property type="nucleotide sequence ID" value="NC_035224.1"/>
</dbReference>
<dbReference type="SMR" id="Q6ENP7"/>
<dbReference type="GeneID" id="33347768"/>
<dbReference type="GO" id="GO:0009535">
    <property type="term" value="C:chloroplast thylakoid membrane"/>
    <property type="evidence" value="ECO:0007669"/>
    <property type="project" value="UniProtKB-SubCell"/>
</dbReference>
<dbReference type="GO" id="GO:0008137">
    <property type="term" value="F:NADH dehydrogenase (ubiquinone) activity"/>
    <property type="evidence" value="ECO:0007669"/>
    <property type="project" value="InterPro"/>
</dbReference>
<dbReference type="GO" id="GO:0048039">
    <property type="term" value="F:ubiquinone binding"/>
    <property type="evidence" value="ECO:0007669"/>
    <property type="project" value="TreeGrafter"/>
</dbReference>
<dbReference type="GO" id="GO:0042773">
    <property type="term" value="P:ATP synthesis coupled electron transport"/>
    <property type="evidence" value="ECO:0007669"/>
    <property type="project" value="InterPro"/>
</dbReference>
<dbReference type="GO" id="GO:0015990">
    <property type="term" value="P:electron transport coupled proton transport"/>
    <property type="evidence" value="ECO:0007669"/>
    <property type="project" value="TreeGrafter"/>
</dbReference>
<dbReference type="HAMAP" id="MF_00491">
    <property type="entry name" value="NDH1_NuoM"/>
    <property type="match status" value="1"/>
</dbReference>
<dbReference type="InterPro" id="IPR022997">
    <property type="entry name" value="NADH_Q_OxRdtase_chain4"/>
</dbReference>
<dbReference type="InterPro" id="IPR010227">
    <property type="entry name" value="NADH_Q_OxRdtase_chainM/4"/>
</dbReference>
<dbReference type="InterPro" id="IPR003918">
    <property type="entry name" value="NADH_UbQ_OxRdtase"/>
</dbReference>
<dbReference type="InterPro" id="IPR001750">
    <property type="entry name" value="ND/Mrp_TM"/>
</dbReference>
<dbReference type="NCBIfam" id="TIGR01972">
    <property type="entry name" value="NDH_I_M"/>
    <property type="match status" value="1"/>
</dbReference>
<dbReference type="PANTHER" id="PTHR43507:SF21">
    <property type="entry name" value="NAD(P)H-QUINONE OXIDOREDUCTASE CHAIN 4, CHLOROPLASTIC"/>
    <property type="match status" value="1"/>
</dbReference>
<dbReference type="PANTHER" id="PTHR43507">
    <property type="entry name" value="NADH-UBIQUINONE OXIDOREDUCTASE CHAIN 4"/>
    <property type="match status" value="1"/>
</dbReference>
<dbReference type="Pfam" id="PF00361">
    <property type="entry name" value="Proton_antipo_M"/>
    <property type="match status" value="1"/>
</dbReference>
<dbReference type="PRINTS" id="PR01437">
    <property type="entry name" value="NUOXDRDTASE4"/>
</dbReference>
<name>NU4C_SACOF</name>
<organism>
    <name type="scientific">Saccharum officinarum</name>
    <name type="common">Sugarcane</name>
    <dbReference type="NCBI Taxonomy" id="4547"/>
    <lineage>
        <taxon>Eukaryota</taxon>
        <taxon>Viridiplantae</taxon>
        <taxon>Streptophyta</taxon>
        <taxon>Embryophyta</taxon>
        <taxon>Tracheophyta</taxon>
        <taxon>Spermatophyta</taxon>
        <taxon>Magnoliopsida</taxon>
        <taxon>Liliopsida</taxon>
        <taxon>Poales</taxon>
        <taxon>Poaceae</taxon>
        <taxon>PACMAD clade</taxon>
        <taxon>Panicoideae</taxon>
        <taxon>Andropogonodae</taxon>
        <taxon>Andropogoneae</taxon>
        <taxon>Saccharinae</taxon>
        <taxon>Saccharum</taxon>
        <taxon>Saccharum officinarum species complex</taxon>
    </lineage>
</organism>
<geneLocation type="chloroplast"/>